<name>RL24_CAMJJ</name>
<accession>A1W1U9</accession>
<feature type="chain" id="PRO_1000052202" description="Large ribosomal subunit protein uL24">
    <location>
        <begin position="1"/>
        <end position="77"/>
    </location>
</feature>
<protein>
    <recommendedName>
        <fullName evidence="1">Large ribosomal subunit protein uL24</fullName>
    </recommendedName>
    <alternativeName>
        <fullName evidence="2">50S ribosomal protein L24</fullName>
    </alternativeName>
</protein>
<proteinExistence type="inferred from homology"/>
<comment type="function">
    <text evidence="1">One of two assembly initiator proteins, it binds directly to the 5'-end of the 23S rRNA, where it nucleates assembly of the 50S subunit.</text>
</comment>
<comment type="function">
    <text evidence="1">One of the proteins that surrounds the polypeptide exit tunnel on the outside of the subunit.</text>
</comment>
<comment type="subunit">
    <text evidence="1">Part of the 50S ribosomal subunit.</text>
</comment>
<comment type="similarity">
    <text evidence="1">Belongs to the universal ribosomal protein uL24 family.</text>
</comment>
<evidence type="ECO:0000255" key="1">
    <source>
        <dbReference type="HAMAP-Rule" id="MF_01326"/>
    </source>
</evidence>
<evidence type="ECO:0000305" key="2"/>
<organism>
    <name type="scientific">Campylobacter jejuni subsp. jejuni serotype O:23/36 (strain 81-176)</name>
    <dbReference type="NCBI Taxonomy" id="354242"/>
    <lineage>
        <taxon>Bacteria</taxon>
        <taxon>Pseudomonadati</taxon>
        <taxon>Campylobacterota</taxon>
        <taxon>Epsilonproteobacteria</taxon>
        <taxon>Campylobacterales</taxon>
        <taxon>Campylobacteraceae</taxon>
        <taxon>Campylobacter</taxon>
    </lineage>
</organism>
<dbReference type="EMBL" id="CP000538">
    <property type="protein sequence ID" value="EAQ72771.1"/>
    <property type="molecule type" value="Genomic_DNA"/>
</dbReference>
<dbReference type="RefSeq" id="WP_002779437.1">
    <property type="nucleotide sequence ID" value="NC_008787.1"/>
</dbReference>
<dbReference type="SMR" id="A1W1U9"/>
<dbReference type="GeneID" id="66544932"/>
<dbReference type="KEGG" id="cjj:CJJ81176_1693"/>
<dbReference type="eggNOG" id="COG0198">
    <property type="taxonomic scope" value="Bacteria"/>
</dbReference>
<dbReference type="HOGENOM" id="CLU_093315_3_0_7"/>
<dbReference type="Proteomes" id="UP000000646">
    <property type="component" value="Chromosome"/>
</dbReference>
<dbReference type="GO" id="GO:1990904">
    <property type="term" value="C:ribonucleoprotein complex"/>
    <property type="evidence" value="ECO:0007669"/>
    <property type="project" value="UniProtKB-KW"/>
</dbReference>
<dbReference type="GO" id="GO:0005840">
    <property type="term" value="C:ribosome"/>
    <property type="evidence" value="ECO:0007669"/>
    <property type="project" value="UniProtKB-KW"/>
</dbReference>
<dbReference type="GO" id="GO:0019843">
    <property type="term" value="F:rRNA binding"/>
    <property type="evidence" value="ECO:0007669"/>
    <property type="project" value="UniProtKB-UniRule"/>
</dbReference>
<dbReference type="GO" id="GO:0003735">
    <property type="term" value="F:structural constituent of ribosome"/>
    <property type="evidence" value="ECO:0007669"/>
    <property type="project" value="InterPro"/>
</dbReference>
<dbReference type="GO" id="GO:0006412">
    <property type="term" value="P:translation"/>
    <property type="evidence" value="ECO:0007669"/>
    <property type="project" value="UniProtKB-UniRule"/>
</dbReference>
<dbReference type="CDD" id="cd06089">
    <property type="entry name" value="KOW_RPL26"/>
    <property type="match status" value="1"/>
</dbReference>
<dbReference type="FunFam" id="2.30.30.30:FF:000023">
    <property type="entry name" value="50S ribosomal protein L24"/>
    <property type="match status" value="1"/>
</dbReference>
<dbReference type="Gene3D" id="2.30.30.30">
    <property type="match status" value="1"/>
</dbReference>
<dbReference type="HAMAP" id="MF_01326_B">
    <property type="entry name" value="Ribosomal_uL24_B"/>
    <property type="match status" value="1"/>
</dbReference>
<dbReference type="InterPro" id="IPR005824">
    <property type="entry name" value="KOW"/>
</dbReference>
<dbReference type="InterPro" id="IPR014722">
    <property type="entry name" value="Rib_uL2_dom2"/>
</dbReference>
<dbReference type="InterPro" id="IPR003256">
    <property type="entry name" value="Ribosomal_uL24"/>
</dbReference>
<dbReference type="InterPro" id="IPR005825">
    <property type="entry name" value="Ribosomal_uL24_CS"/>
</dbReference>
<dbReference type="InterPro" id="IPR041988">
    <property type="entry name" value="Ribosomal_uL24_KOW"/>
</dbReference>
<dbReference type="InterPro" id="IPR008991">
    <property type="entry name" value="Translation_prot_SH3-like_sf"/>
</dbReference>
<dbReference type="NCBIfam" id="TIGR01079">
    <property type="entry name" value="rplX_bact"/>
    <property type="match status" value="1"/>
</dbReference>
<dbReference type="PANTHER" id="PTHR12903">
    <property type="entry name" value="MITOCHONDRIAL RIBOSOMAL PROTEIN L24"/>
    <property type="match status" value="1"/>
</dbReference>
<dbReference type="Pfam" id="PF00467">
    <property type="entry name" value="KOW"/>
    <property type="match status" value="1"/>
</dbReference>
<dbReference type="Pfam" id="PF17136">
    <property type="entry name" value="ribosomal_L24"/>
    <property type="match status" value="1"/>
</dbReference>
<dbReference type="SMART" id="SM00739">
    <property type="entry name" value="KOW"/>
    <property type="match status" value="1"/>
</dbReference>
<dbReference type="SUPFAM" id="SSF50104">
    <property type="entry name" value="Translation proteins SH3-like domain"/>
    <property type="match status" value="1"/>
</dbReference>
<dbReference type="PROSITE" id="PS01108">
    <property type="entry name" value="RIBOSOMAL_L24"/>
    <property type="match status" value="1"/>
</dbReference>
<sequence length="77" mass="8283">MAVKLKIKKGDSVKVITGDDKGKTGKVLAVYPKTLKVVVEGCKIAKKAIKPSEKNPNGGFINKEMPMDISNVAKVQE</sequence>
<gene>
    <name evidence="1" type="primary">rplX</name>
    <name type="ordered locus">CJJ81176_1693</name>
</gene>
<reference key="1">
    <citation type="submission" date="2006-12" db="EMBL/GenBank/DDBJ databases">
        <authorList>
            <person name="Fouts D.E."/>
            <person name="Nelson K.E."/>
            <person name="Sebastian Y."/>
        </authorList>
    </citation>
    <scope>NUCLEOTIDE SEQUENCE [LARGE SCALE GENOMIC DNA]</scope>
    <source>
        <strain>81-176</strain>
    </source>
</reference>
<keyword id="KW-0687">Ribonucleoprotein</keyword>
<keyword id="KW-0689">Ribosomal protein</keyword>
<keyword id="KW-0694">RNA-binding</keyword>
<keyword id="KW-0699">rRNA-binding</keyword>